<comment type="function">
    <text evidence="2 4">Component of the Rcs signaling system, which controls transcription of numerous genes. RcsC functions as a membrane-associated protein kinase that phosphorylates RcsD in response to environmental signals. The phosphoryl group is then transferred to the response regulator RcsB (By similarity). Involved in regulation of K30 capsular polysaccharide synthesis.</text>
</comment>
<comment type="catalytic activity">
    <reaction evidence="2">
        <text>ATP + protein L-histidine = ADP + protein N-phospho-L-histidine.</text>
        <dbReference type="EC" id="2.7.13.3"/>
    </reaction>
</comment>
<comment type="subunit">
    <text evidence="2">Interacts with RcsD.</text>
</comment>
<comment type="subcellular location">
    <subcellularLocation>
        <location evidence="2">Cell inner membrane</location>
        <topology evidence="2">Multi-pass membrane protein</topology>
    </subcellularLocation>
</comment>
<comment type="PTM">
    <text evidence="2">Autophosphorylated. Activation probably requires a transfer of a phosphate group from a His in the transmitter domain to an Asp in the receiver domain.</text>
</comment>
<comment type="similarity">
    <text evidence="2">Belongs to the RcsC family.</text>
</comment>
<comment type="sequence caution" evidence="5">
    <conflict type="erroneous initiation">
        <sequence resource="EMBL-CDS" id="AAA24505"/>
    </conflict>
    <text>Truncated N-terminus.</text>
</comment>
<proteinExistence type="evidence at protein level"/>
<feature type="chain" id="PRO_0000425316" description="Sensor histidine kinase RcsC">
    <location>
        <begin position="1"/>
        <end position="949"/>
    </location>
</feature>
<feature type="topological domain" description="Cytoplasmic" evidence="1">
    <location>
        <begin position="1"/>
        <end position="19"/>
    </location>
</feature>
<feature type="transmembrane region" description="Helical" evidence="2">
    <location>
        <begin position="20"/>
        <end position="41"/>
    </location>
</feature>
<feature type="topological domain" description="Periplasmic" evidence="1">
    <location>
        <begin position="42"/>
        <end position="313"/>
    </location>
</feature>
<feature type="transmembrane region" description="Helical" evidence="2">
    <location>
        <begin position="314"/>
        <end position="335"/>
    </location>
</feature>
<feature type="topological domain" description="Cytoplasmic" evidence="1">
    <location>
        <begin position="336"/>
        <end position="949"/>
    </location>
</feature>
<feature type="domain" description="PAS" evidence="2">
    <location>
        <begin position="357"/>
        <end position="425"/>
    </location>
</feature>
<feature type="domain" description="Histidine kinase" evidence="2">
    <location>
        <begin position="476"/>
        <end position="692"/>
    </location>
</feature>
<feature type="domain" description="ABL" evidence="2">
    <location>
        <begin position="705"/>
        <end position="805"/>
    </location>
</feature>
<feature type="domain" description="Response regulatory" evidence="3">
    <location>
        <begin position="826"/>
        <end position="940"/>
    </location>
</feature>
<feature type="modified residue" description="Phosphohistidine; by autocatalysis" evidence="2">
    <location>
        <position position="479"/>
    </location>
</feature>
<feature type="modified residue" description="4-aspartylphosphate" evidence="2">
    <location>
        <position position="875"/>
    </location>
</feature>
<evidence type="ECO:0000255" key="1"/>
<evidence type="ECO:0000255" key="2">
    <source>
        <dbReference type="HAMAP-Rule" id="MF_00979"/>
    </source>
</evidence>
<evidence type="ECO:0000255" key="3">
    <source>
        <dbReference type="PROSITE-ProRule" id="PRU00169"/>
    </source>
</evidence>
<evidence type="ECO:0000269" key="4">
    <source>
    </source>
</evidence>
<evidence type="ECO:0000305" key="5"/>
<reference key="1">
    <citation type="journal article" date="1993" name="J. Bacteriol.">
        <title>Characterization of rcsB and rcsC from Escherichia coli O9:K30:H12 and examination of the role of the rcs regulatory system in expression of group I capsular polysaccharides.</title>
        <authorList>
            <person name="Jayaratne P."/>
            <person name="Keenleyside W.J."/>
            <person name="Maclachlan P.R."/>
            <person name="Dodgson C."/>
            <person name="Whitfield C."/>
        </authorList>
    </citation>
    <scope>NUCLEOTIDE SEQUENCE [GENOMIC DNA]</scope>
    <scope>FUNCTION IN CAPSULAR POLYSACCHARIDE SYNTHESIS</scope>
    <source>
        <strain>O9:K30:H12</strain>
    </source>
</reference>
<dbReference type="EC" id="2.7.13.3" evidence="2"/>
<dbReference type="EMBL" id="L11272">
    <property type="protein sequence ID" value="AAA24505.1"/>
    <property type="status" value="ALT_INIT"/>
    <property type="molecule type" value="Genomic_DNA"/>
</dbReference>
<dbReference type="PIR" id="H64991">
    <property type="entry name" value="BVECCC"/>
</dbReference>
<dbReference type="BMRB" id="P0DMC6"/>
<dbReference type="SMR" id="P0DMC6"/>
<dbReference type="STRING" id="585034.ECIAI1_2302"/>
<dbReference type="eggNOG" id="COG0784">
    <property type="taxonomic scope" value="Bacteria"/>
</dbReference>
<dbReference type="eggNOG" id="COG2205">
    <property type="taxonomic scope" value="Bacteria"/>
</dbReference>
<dbReference type="BRENDA" id="2.7.13.3">
    <property type="organism ID" value="2026"/>
</dbReference>
<dbReference type="GO" id="GO:0005886">
    <property type="term" value="C:plasma membrane"/>
    <property type="evidence" value="ECO:0007669"/>
    <property type="project" value="UniProtKB-SubCell"/>
</dbReference>
<dbReference type="GO" id="GO:0005524">
    <property type="term" value="F:ATP binding"/>
    <property type="evidence" value="ECO:0007669"/>
    <property type="project" value="UniProtKB-UniRule"/>
</dbReference>
<dbReference type="GO" id="GO:0000155">
    <property type="term" value="F:phosphorelay sensor kinase activity"/>
    <property type="evidence" value="ECO:0007669"/>
    <property type="project" value="UniProtKB-UniRule"/>
</dbReference>
<dbReference type="GO" id="GO:0006355">
    <property type="term" value="P:regulation of DNA-templated transcription"/>
    <property type="evidence" value="ECO:0007669"/>
    <property type="project" value="InterPro"/>
</dbReference>
<dbReference type="CDD" id="cd16922">
    <property type="entry name" value="HATPase_EvgS-ArcB-TorS-like"/>
    <property type="match status" value="1"/>
</dbReference>
<dbReference type="CDD" id="cd00082">
    <property type="entry name" value="HisKA"/>
    <property type="match status" value="1"/>
</dbReference>
<dbReference type="CDD" id="cd17546">
    <property type="entry name" value="REC_hyHK_CKI1_RcsC-like"/>
    <property type="match status" value="1"/>
</dbReference>
<dbReference type="FunFam" id="1.10.287.130:FF:000019">
    <property type="entry name" value="Sensor histidine kinase RcsC"/>
    <property type="match status" value="1"/>
</dbReference>
<dbReference type="FunFam" id="3.30.565.10:FF:000010">
    <property type="entry name" value="Sensor histidine kinase RcsC"/>
    <property type="match status" value="1"/>
</dbReference>
<dbReference type="FunFam" id="3.40.50.2300:FF:000121">
    <property type="entry name" value="Sensor histidine kinase RcsC"/>
    <property type="match status" value="1"/>
</dbReference>
<dbReference type="Gene3D" id="1.10.287.130">
    <property type="match status" value="1"/>
</dbReference>
<dbReference type="Gene3D" id="3.40.50.10970">
    <property type="match status" value="1"/>
</dbReference>
<dbReference type="Gene3D" id="3.40.50.2300">
    <property type="match status" value="1"/>
</dbReference>
<dbReference type="Gene3D" id="3.30.565.10">
    <property type="entry name" value="Histidine kinase-like ATPase, C-terminal domain"/>
    <property type="match status" value="1"/>
</dbReference>
<dbReference type="HAMAP" id="MF_00979">
    <property type="entry name" value="RcsC"/>
    <property type="match status" value="1"/>
</dbReference>
<dbReference type="InterPro" id="IPR011006">
    <property type="entry name" value="CheY-like_superfamily"/>
</dbReference>
<dbReference type="InterPro" id="IPR036890">
    <property type="entry name" value="HATPase_C_sf"/>
</dbReference>
<dbReference type="InterPro" id="IPR005467">
    <property type="entry name" value="His_kinase_dom"/>
</dbReference>
<dbReference type="InterPro" id="IPR003661">
    <property type="entry name" value="HisK_dim/P_dom"/>
</dbReference>
<dbReference type="InterPro" id="IPR036097">
    <property type="entry name" value="HisK_dim/P_sf"/>
</dbReference>
<dbReference type="InterPro" id="IPR030856">
    <property type="entry name" value="RcsC"/>
</dbReference>
<dbReference type="InterPro" id="IPR038388">
    <property type="entry name" value="RcsC_C_sf"/>
</dbReference>
<dbReference type="InterPro" id="IPR004358">
    <property type="entry name" value="Sig_transdc_His_kin-like_C"/>
</dbReference>
<dbReference type="InterPro" id="IPR019017">
    <property type="entry name" value="Sig_transdc_His_kin_a/b-loop_C"/>
</dbReference>
<dbReference type="InterPro" id="IPR001789">
    <property type="entry name" value="Sig_transdc_resp-reg_receiver"/>
</dbReference>
<dbReference type="NCBIfam" id="NF008099">
    <property type="entry name" value="PRK10841.1"/>
    <property type="match status" value="1"/>
</dbReference>
<dbReference type="PANTHER" id="PTHR45339">
    <property type="entry name" value="HYBRID SIGNAL TRANSDUCTION HISTIDINE KINASE J"/>
    <property type="match status" value="1"/>
</dbReference>
<dbReference type="PANTHER" id="PTHR45339:SF1">
    <property type="entry name" value="HYBRID SIGNAL TRANSDUCTION HISTIDINE KINASE J"/>
    <property type="match status" value="1"/>
</dbReference>
<dbReference type="Pfam" id="PF02518">
    <property type="entry name" value="HATPase_c"/>
    <property type="match status" value="1"/>
</dbReference>
<dbReference type="Pfam" id="PF00512">
    <property type="entry name" value="HisKA"/>
    <property type="match status" value="1"/>
</dbReference>
<dbReference type="Pfam" id="PF09456">
    <property type="entry name" value="RcsC"/>
    <property type="match status" value="1"/>
</dbReference>
<dbReference type="Pfam" id="PF00072">
    <property type="entry name" value="Response_reg"/>
    <property type="match status" value="1"/>
</dbReference>
<dbReference type="PRINTS" id="PR00344">
    <property type="entry name" value="BCTRLSENSOR"/>
</dbReference>
<dbReference type="SMART" id="SM00387">
    <property type="entry name" value="HATPase_c"/>
    <property type="match status" value="1"/>
</dbReference>
<dbReference type="SMART" id="SM00388">
    <property type="entry name" value="HisKA"/>
    <property type="match status" value="1"/>
</dbReference>
<dbReference type="SMART" id="SM00448">
    <property type="entry name" value="REC"/>
    <property type="match status" value="1"/>
</dbReference>
<dbReference type="SUPFAM" id="SSF55874">
    <property type="entry name" value="ATPase domain of HSP90 chaperone/DNA topoisomerase II/histidine kinase"/>
    <property type="match status" value="1"/>
</dbReference>
<dbReference type="SUPFAM" id="SSF52172">
    <property type="entry name" value="CheY-like"/>
    <property type="match status" value="2"/>
</dbReference>
<dbReference type="SUPFAM" id="SSF47384">
    <property type="entry name" value="Homodimeric domain of signal transducing histidine kinase"/>
    <property type="match status" value="1"/>
</dbReference>
<dbReference type="PROSITE" id="PS51426">
    <property type="entry name" value="ABL"/>
    <property type="match status" value="1"/>
</dbReference>
<dbReference type="PROSITE" id="PS50109">
    <property type="entry name" value="HIS_KIN"/>
    <property type="match status" value="1"/>
</dbReference>
<dbReference type="PROSITE" id="PS50110">
    <property type="entry name" value="RESPONSE_REGULATORY"/>
    <property type="match status" value="1"/>
</dbReference>
<name>RCSC_ECOLX</name>
<keyword id="KW-0067">ATP-binding</keyword>
<keyword id="KW-0997">Cell inner membrane</keyword>
<keyword id="KW-1003">Cell membrane</keyword>
<keyword id="KW-0418">Kinase</keyword>
<keyword id="KW-0472">Membrane</keyword>
<keyword id="KW-0547">Nucleotide-binding</keyword>
<keyword id="KW-0597">Phosphoprotein</keyword>
<keyword id="KW-0808">Transferase</keyword>
<keyword id="KW-0812">Transmembrane</keyword>
<keyword id="KW-1133">Transmembrane helix</keyword>
<keyword id="KW-0902">Two-component regulatory system</keyword>
<organism>
    <name type="scientific">Escherichia coli</name>
    <dbReference type="NCBI Taxonomy" id="562"/>
    <lineage>
        <taxon>Bacteria</taxon>
        <taxon>Pseudomonadati</taxon>
        <taxon>Pseudomonadota</taxon>
        <taxon>Gammaproteobacteria</taxon>
        <taxon>Enterobacterales</taxon>
        <taxon>Enterobacteriaceae</taxon>
        <taxon>Escherichia</taxon>
    </lineage>
</organism>
<sequence>MKYLASFRTTLKASRYMFRALALVLWLLIAFSSVFYIVNALHQRESEIRQEFNLSSDQAQRFIQRTSDVMKELKYIAENRLSAENGVLSPRGRETQADVPAFEPLFADSDCSAMSNTWRGSLESLAWFIGYWRDNFSAAYDLNRVFLIGSDNLCMANFGLRDMPVERDTALKALHERINKYRNAPQDDSGSNLYWISEGPRPGVGYFYALTPVYLANRLQALLGVEQTIRMENFFLPGTLPMGVTILDENGHTLISLTGPESKIKGDPRWMQERSWFGYTEGFRELVLKKNLPPSSLSIVYSVPVDKVLERIRMVILNAILLNVLAGAALFTLARMYERRIFIPAESDALRLEEHEQFNRKIVASAPVGICILRTADGVNILSNELAHTYLNMLTHEDRQRLTQIICGQQVNFVDVLTSNNTNLQISFVHSRYRNENVAICVLVDVSSRVKMEESLQEMAQAAEQASQSKSMFLATVSHELRTPLYGIIGNLDLLQTKELPKGVDRLVTAMNNSSSLLLKIISDILDFSKIESEQLKIEPREFSPREVMNHITANYLPLVVRKQLGLYCFIEPDVPVALNGDPMRLQQVISNLLSNAIKFTDTGCIVLHVRADGDYLSIRVRDTGVGIPAKEVVRLFDPFFQVGTGVQRNFQGTGLGLAICEKLISMMDGDISVDSEPGMGSQFTVRIPLYGAQYPQKKGVEGLSGKRCWLAVRNASLCQFLETSLQRSGIVVTTYEGQEPTPEDVLITDEVVSKKWQGRAVVTFCRRHIGIPLEEAPGEWVHSVAAPHELPALLARIYLIEMESDDPANALPSTDKAVSDNDDMMILVVDDHPINRRLLADQLGSLGYQCKTANDGVDALNVLSKNHIDIVLSDVNMPNMDGYRLTQRTRQLGLTLPVIGVTANALAEEKQRCLESGMDSCLSKPVTLDVIKQTLTVYAERVRKSRES</sequence>
<protein>
    <recommendedName>
        <fullName evidence="2">Sensor histidine kinase RcsC</fullName>
        <ecNumber evidence="2">2.7.13.3</ecNumber>
    </recommendedName>
</protein>
<gene>
    <name evidence="2" type="primary">rcsC</name>
</gene>
<accession>P0DMC6</accession>
<accession>P14376</accession>
<accession>P76457</accession>
<accession>P97170</accession>
<accession>P97202</accession>
<accession>Q47586</accession>